<sequence length="616" mass="67142">MMEHTAHDRELPIRPGWDSVVNIAESRSCFSRFQSCFARPQKLVVVIGLCLLLCSPPPGAQGLPTAADWKTLSNELSGRLHQGVPLARPCFSTYNGQPAAADEEECAAIRHRYLDAEFRANQYAGFYFAQGDGCISNTTNQCQLDPENLGASPGSGLPCNQGLVSPWYVDVRSASDVQSAFRFARRTGTPISIKASGHDYVNRHTLPGSLGLWTRNLRNMTYHATFRPAGVSGAEPVQAITFGSGVNSNEAQAFAGRNNVTLVGPSSATIAIVGGWTLFGGHSVLSPTLGLGVDRVLQIELVTPDGALRICNRQLHADLFWALRGAGAGTYGVVLSMTVRVEPATPVTLALLSFTPTLENQAPFLDLLINNTPAWSAGGWGGPMTSSSLALVSLEQDEAAAAQSMRAAADYVRGENGTVTIEQFPTYSEFYARYIAVSESYVGIGALPTLRVLPKRLHDQPQGRAELLAFLSQRARNNQTPYLFMTPPARYSTPRDSTSMHPAWRNSYWLAGFQSSYAWNASVAERREAAREDQTSARDLTALAPEGAAYPNEASPWHRDWRREFWGDDNYARLEAVKARYDPAGLLRCWHCVGFDDAWVHADPAFECMGAFDGLV</sequence>
<reference key="1">
    <citation type="journal article" date="2015" name="Genome Announc.">
        <title>Draft genome sequence of the cellulolytic fungus Chaetomium globosum.</title>
        <authorList>
            <person name="Cuomo C.A."/>
            <person name="Untereiner W.A."/>
            <person name="Ma L.-J."/>
            <person name="Grabherr M."/>
            <person name="Birren B.W."/>
        </authorList>
    </citation>
    <scope>NUCLEOTIDE SEQUENCE [LARGE SCALE GENOMIC DNA]</scope>
    <source>
        <strain>ATCC 6205 / CBS 148.51 / DSM 1962 / NBRC 6347 / NRRL 1970</strain>
    </source>
</reference>
<reference key="2">
    <citation type="journal article" date="2013" name="J. Am. Chem. Soc.">
        <title>Combinatorial generation of complexity by redox enzymes in the chaetoglobosin A biosynthesis.</title>
        <authorList>
            <person name="Ishiuchi K."/>
            <person name="Nakazawa T."/>
            <person name="Yagishita F."/>
            <person name="Mino T."/>
            <person name="Noguchi H."/>
            <person name="Hotta K."/>
            <person name="Watanabe K."/>
        </authorList>
    </citation>
    <scope>FUNCTION</scope>
    <scope>DISRUPTION PHENOTYPE</scope>
    <scope>PATHWAY</scope>
</reference>
<reference key="3">
    <citation type="journal article" date="2021" name="Fungal Biol.">
        <title>Functional analysis of a chaetoglobosin A biosynthetic regulator in Chaetomium globosum.</title>
        <authorList>
            <person name="Cheng M."/>
            <person name="Zhao S."/>
            <person name="Liu H."/>
            <person name="Liu Y."/>
            <person name="Lin C."/>
            <person name="Song J."/>
            <person name="Thawai C."/>
            <person name="Charoensettasilp S."/>
            <person name="Yang Q."/>
        </authorList>
    </citation>
    <scope>FUNCTION</scope>
    <scope>INDUCTION</scope>
</reference>
<gene>
    <name evidence="4" type="primary">cheF</name>
    <name type="ORF">CHGG_01242-2</name>
</gene>
<accession>P0CU32</accession>
<accession>Q2HEW2</accession>
<name>CHEF_CHAGB</name>
<proteinExistence type="evidence at transcript level"/>
<evidence type="ECO:0000255" key="1">
    <source>
        <dbReference type="PROSITE-ProRule" id="PRU00718"/>
    </source>
</evidence>
<evidence type="ECO:0000269" key="2">
    <source>
    </source>
</evidence>
<evidence type="ECO:0000269" key="3">
    <source>
    </source>
</evidence>
<evidence type="ECO:0000303" key="4">
    <source>
    </source>
</evidence>
<evidence type="ECO:0000305" key="5"/>
<evidence type="ECO:0000305" key="6">
    <source>
    </source>
</evidence>
<evidence type="ECO:0000305" key="7">
    <source>
    </source>
</evidence>
<protein>
    <recommendedName>
        <fullName evidence="4">FAD-linked oxidoreductase cheF</fullName>
        <ecNumber evidence="6">1.-.-.-</ecNumber>
    </recommendedName>
    <alternativeName>
        <fullName evidence="4">Chaetoglobosin A biosynthesis cluster protein F</fullName>
    </alternativeName>
</protein>
<keyword id="KW-0274">FAD</keyword>
<keyword id="KW-0285">Flavoprotein</keyword>
<keyword id="KW-0560">Oxidoreductase</keyword>
<keyword id="KW-1185">Reference proteome</keyword>
<dbReference type="EC" id="1.-.-.-" evidence="6"/>
<dbReference type="EMBL" id="CH408029">
    <property type="protein sequence ID" value="EAQ93007.1"/>
    <property type="status" value="ALT_SEQ"/>
    <property type="molecule type" value="Genomic_DNA"/>
</dbReference>
<dbReference type="RefSeq" id="XP_001220463.1">
    <property type="nucleotide sequence ID" value="XM_001220462.1"/>
</dbReference>
<dbReference type="SMR" id="P0CU32"/>
<dbReference type="STRING" id="306901.P0CU32"/>
<dbReference type="VEuPathDB" id="FungiDB:CHGG_01242"/>
<dbReference type="eggNOG" id="KOG0158">
    <property type="taxonomic scope" value="Eukaryota"/>
</dbReference>
<dbReference type="InParanoid" id="P0CU32"/>
<dbReference type="OrthoDB" id="9983560at2759"/>
<dbReference type="Proteomes" id="UP000001056">
    <property type="component" value="Unassembled WGS sequence"/>
</dbReference>
<dbReference type="GO" id="GO:0071949">
    <property type="term" value="F:FAD binding"/>
    <property type="evidence" value="ECO:0007669"/>
    <property type="project" value="InterPro"/>
</dbReference>
<dbReference type="GO" id="GO:0016491">
    <property type="term" value="F:oxidoreductase activity"/>
    <property type="evidence" value="ECO:0007669"/>
    <property type="project" value="UniProtKB-KW"/>
</dbReference>
<dbReference type="Gene3D" id="3.30.465.10">
    <property type="match status" value="2"/>
</dbReference>
<dbReference type="InterPro" id="IPR012951">
    <property type="entry name" value="BBE"/>
</dbReference>
<dbReference type="InterPro" id="IPR016166">
    <property type="entry name" value="FAD-bd_PCMH"/>
</dbReference>
<dbReference type="InterPro" id="IPR036318">
    <property type="entry name" value="FAD-bd_PCMH-like_sf"/>
</dbReference>
<dbReference type="InterPro" id="IPR016169">
    <property type="entry name" value="FAD-bd_PCMH_sub2"/>
</dbReference>
<dbReference type="InterPro" id="IPR050432">
    <property type="entry name" value="FAD-linked_Oxidoreductases_BP"/>
</dbReference>
<dbReference type="InterPro" id="IPR006094">
    <property type="entry name" value="Oxid_FAD_bind_N"/>
</dbReference>
<dbReference type="PANTHER" id="PTHR13878:SF91">
    <property type="entry name" value="FAD BINDING DOMAIN PROTEIN (AFU_ORTHOLOGUE AFUA_6G12070)-RELATED"/>
    <property type="match status" value="1"/>
</dbReference>
<dbReference type="PANTHER" id="PTHR13878">
    <property type="entry name" value="GULONOLACTONE OXIDASE"/>
    <property type="match status" value="1"/>
</dbReference>
<dbReference type="Pfam" id="PF08031">
    <property type="entry name" value="BBE"/>
    <property type="match status" value="1"/>
</dbReference>
<dbReference type="Pfam" id="PF01565">
    <property type="entry name" value="FAD_binding_4"/>
    <property type="match status" value="1"/>
</dbReference>
<dbReference type="SUPFAM" id="SSF56176">
    <property type="entry name" value="FAD-binding/transporter-associated domain-like"/>
    <property type="match status" value="1"/>
</dbReference>
<dbReference type="PROSITE" id="PS51387">
    <property type="entry name" value="FAD_PCMH"/>
    <property type="match status" value="1"/>
</dbReference>
<comment type="function">
    <text evidence="2 3 7">FAD-linked oxidoreductase; part of the gene cluster that mediates the biosynthesis of chaetoglobosin A which has a unique inhibitory activity against actin polymerization in mammalian cells (PubMed:23611317, PubMed:33622536). Chaetoglobosin A and its intermediates are involved in the morphological differentiation of C.globosum (PubMed:33622536). The first step of the pathway is the synthesis of prochaetoglobosin I via condensation of one acetyl-CoA, 8 malonyl-CoA, and a L-tryptophan molecule by the PKS-NRPS hybrid synthetase cheA, followed by reduction of backbone double bond to install desired geometry by the enoyl reductase cheB (PubMed:23611317). Further multiple oxidation steps performed by the cytochrome P450 monooxygenases cheE and cheG, as well as by the FAD-linked oxidoreductase cheF, lead to the formation of chaetoglobosin A (PubMed:23611317). Depending on the order of action of these reductases, distinct intermediates can be identified (PubMed:23611317). Within the pathway, the cytochrome P450 monooxygenase cheE catalyzes a stereospecific epoxidation on prochaetoglobosin I, cytoglobosin D, and chaetoglobosin J intermediates (PubMed:23611317). The FAD-linked oxidoreductase cheF performs dehydrogenation of the C-20 hydroxyl groups in the 20-dihyrochaetoglobosin A and cytoglobosin D intermediates (PubMed:23611317). Finally, the cytochrome P450 monooxygenase cheG can catalyze the stereospecific dihydroxylation of prochaetoglobosin I and prochaetoglobosin IV at C-19 and C-20, respectively (PubMed:23611317). The Diels-Alderase cheD may play a role in the post-PKS-NRPS biosynthetic steps catalyzing Diels-Alder cyclization (Probable).</text>
</comment>
<comment type="cofactor">
    <cofactor evidence="5">
        <name>FAD</name>
        <dbReference type="ChEBI" id="CHEBI:57692"/>
    </cofactor>
</comment>
<comment type="pathway">
    <text evidence="2">Secondary metabolite biosynthesis.</text>
</comment>
<comment type="induction">
    <text evidence="3">Expression is positively regulated by the cluster-specific transcription factor cheR that binds directly to an asymmetric direct repeat present in the promoter.</text>
</comment>
<comment type="disruption phenotype">
    <text evidence="2">Impairs the production of chaetoglobosin A but leads to the accumulation of 20-dihydrochaetoglobosin A (PubMed:23611317).</text>
</comment>
<comment type="similarity">
    <text evidence="5">Belongs to the oxygen-dependent FAD-linked oxidoreductase family.</text>
</comment>
<comment type="sequence caution" evidence="2">
    <conflict type="erroneous gene model prediction">
        <sequence resource="EMBL-CDS" id="EAQ93007"/>
    </conflict>
    <text>The predicted gene CHGG_01242 has been split into 2 genes: CHGG_01242-1 and CHGG_01242-2.</text>
</comment>
<feature type="chain" id="PRO_0000438244" description="FAD-linked oxidoreductase cheF">
    <location>
        <begin position="1"/>
        <end position="616"/>
    </location>
</feature>
<feature type="domain" description="FAD-binding PCMH-type" evidence="1">
    <location>
        <begin position="160"/>
        <end position="344"/>
    </location>
</feature>
<organism>
    <name type="scientific">Chaetomium globosum (strain ATCC 6205 / CBS 148.51 / DSM 1962 / NBRC 6347 / NRRL 1970)</name>
    <name type="common">Soil fungus</name>
    <dbReference type="NCBI Taxonomy" id="306901"/>
    <lineage>
        <taxon>Eukaryota</taxon>
        <taxon>Fungi</taxon>
        <taxon>Dikarya</taxon>
        <taxon>Ascomycota</taxon>
        <taxon>Pezizomycotina</taxon>
        <taxon>Sordariomycetes</taxon>
        <taxon>Sordariomycetidae</taxon>
        <taxon>Sordariales</taxon>
        <taxon>Chaetomiaceae</taxon>
        <taxon>Chaetomium</taxon>
    </lineage>
</organism>